<proteinExistence type="evidence at protein level"/>
<keyword id="KW-0002">3D-structure</keyword>
<keyword id="KW-0025">Alternative splicing</keyword>
<keyword id="KW-1003">Cell membrane</keyword>
<keyword id="KW-0175">Coiled coil</keyword>
<keyword id="KW-1015">Disulfide bond</keyword>
<keyword id="KW-0325">Glycoprotein</keyword>
<keyword id="KW-0472">Membrane</keyword>
<keyword id="KW-0597">Phosphoprotein</keyword>
<keyword id="KW-1267">Proteomics identification</keyword>
<keyword id="KW-0675">Receptor</keyword>
<keyword id="KW-1185">Reference proteome</keyword>
<keyword id="KW-0677">Repeat</keyword>
<keyword id="KW-0964">Secreted</keyword>
<keyword id="KW-0732">Signal</keyword>
<keyword id="KW-0812">Transmembrane</keyword>
<keyword id="KW-1133">Transmembrane helix</keyword>
<accession>O43157</accession>
<accession>A6H8Y2</accession>
<accession>Q6NY20</accession>
<accession>Q9UIV7</accession>
<accession>Q9UJ92</accession>
<accession>Q9UJ93</accession>
<gene>
    <name type="primary">PLXNB1</name>
    <name type="synonym">KIAA0407</name>
    <name type="synonym">PLXN5</name>
    <name type="synonym">SEP</name>
</gene>
<dbReference type="EMBL" id="AB007867">
    <property type="protein sequence ID" value="BAA23703.2"/>
    <property type="status" value="ALT_INIT"/>
    <property type="molecule type" value="mRNA"/>
</dbReference>
<dbReference type="EMBL" id="AJ011414">
    <property type="protein sequence ID" value="CAB56221.1"/>
    <property type="molecule type" value="mRNA"/>
</dbReference>
<dbReference type="EMBL" id="AJ011415">
    <property type="protein sequence ID" value="CAB56222.1"/>
    <property type="molecule type" value="mRNA"/>
</dbReference>
<dbReference type="EMBL" id="X87904">
    <property type="protein sequence ID" value="CAB57277.1"/>
    <property type="molecule type" value="mRNA"/>
</dbReference>
<dbReference type="EMBL" id="CH471055">
    <property type="protein sequence ID" value="EAW64865.1"/>
    <property type="molecule type" value="Genomic_DNA"/>
</dbReference>
<dbReference type="EMBL" id="BC146793">
    <property type="protein sequence ID" value="AAI46794.1"/>
    <property type="molecule type" value="mRNA"/>
</dbReference>
<dbReference type="CCDS" id="CCDS2765.1">
    <molecule id="O43157-1"/>
</dbReference>
<dbReference type="RefSeq" id="NP_001123554.1">
    <molecule id="O43157-1"/>
    <property type="nucleotide sequence ID" value="NM_001130082.3"/>
</dbReference>
<dbReference type="RefSeq" id="NP_002664.2">
    <molecule id="O43157-1"/>
    <property type="nucleotide sequence ID" value="NM_002673.5"/>
</dbReference>
<dbReference type="RefSeq" id="XP_016862120.1">
    <molecule id="O43157-1"/>
    <property type="nucleotide sequence ID" value="XM_017006631.2"/>
</dbReference>
<dbReference type="RefSeq" id="XP_047304287.1">
    <molecule id="O43157-1"/>
    <property type="nucleotide sequence ID" value="XM_047448331.1"/>
</dbReference>
<dbReference type="RefSeq" id="XP_047304288.1">
    <molecule id="O43157-1"/>
    <property type="nucleotide sequence ID" value="XM_047448332.1"/>
</dbReference>
<dbReference type="RefSeq" id="XP_047304289.1">
    <molecule id="O43157-1"/>
    <property type="nucleotide sequence ID" value="XM_047448333.1"/>
</dbReference>
<dbReference type="RefSeq" id="XP_047304290.1">
    <molecule id="O43157-1"/>
    <property type="nucleotide sequence ID" value="XM_047448334.1"/>
</dbReference>
<dbReference type="RefSeq" id="XP_047304291.1">
    <molecule id="O43157-1"/>
    <property type="nucleotide sequence ID" value="XM_047448335.1"/>
</dbReference>
<dbReference type="RefSeq" id="XP_054202868.1">
    <molecule id="O43157-1"/>
    <property type="nucleotide sequence ID" value="XM_054346893.1"/>
</dbReference>
<dbReference type="RefSeq" id="XP_054202869.1">
    <molecule id="O43157-1"/>
    <property type="nucleotide sequence ID" value="XM_054346894.1"/>
</dbReference>
<dbReference type="RefSeq" id="XP_054202870.1">
    <molecule id="O43157-1"/>
    <property type="nucleotide sequence ID" value="XM_054346895.1"/>
</dbReference>
<dbReference type="RefSeq" id="XP_054202871.1">
    <molecule id="O43157-1"/>
    <property type="nucleotide sequence ID" value="XM_054346896.1"/>
</dbReference>
<dbReference type="RefSeq" id="XP_054202872.1">
    <molecule id="O43157-1"/>
    <property type="nucleotide sequence ID" value="XM_054346897.1"/>
</dbReference>
<dbReference type="PDB" id="2JPH">
    <property type="method" value="NMR"/>
    <property type="chains" value="A=1743-1862"/>
</dbReference>
<dbReference type="PDB" id="2OS6">
    <property type="method" value="NMR"/>
    <property type="chains" value="B=2128-2135"/>
</dbReference>
<dbReference type="PDB" id="2R2O">
    <property type="method" value="X-ray"/>
    <property type="resolution" value="2.00 A"/>
    <property type="chains" value="A/B=1743-1862"/>
</dbReference>
<dbReference type="PDB" id="2REX">
    <property type="method" value="X-ray"/>
    <property type="resolution" value="2.30 A"/>
    <property type="chains" value="A/C=1743-1862"/>
</dbReference>
<dbReference type="PDB" id="3HM6">
    <property type="method" value="X-ray"/>
    <property type="resolution" value="2.40 A"/>
    <property type="chains" value="X=1511-2135"/>
</dbReference>
<dbReference type="PDB" id="3OL2">
    <property type="method" value="X-ray"/>
    <property type="resolution" value="2.99 A"/>
    <property type="chains" value="B=20-535"/>
</dbReference>
<dbReference type="PDB" id="3SU8">
    <property type="method" value="X-ray"/>
    <property type="resolution" value="3.20 A"/>
    <property type="chains" value="X=1533-2135"/>
</dbReference>
<dbReference type="PDB" id="3SUA">
    <property type="method" value="X-ray"/>
    <property type="resolution" value="4.39 A"/>
    <property type="chains" value="D/E/F=1511-2135"/>
</dbReference>
<dbReference type="PDB" id="5B4W">
    <property type="method" value="X-ray"/>
    <property type="resolution" value="2.60 A"/>
    <property type="chains" value="A/B/C/D/E/F=20-535"/>
</dbReference>
<dbReference type="PDB" id="7VF3">
    <property type="method" value="X-ray"/>
    <property type="resolution" value="2.29 A"/>
    <property type="chains" value="A/C=19-535"/>
</dbReference>
<dbReference type="PDB" id="7VG7">
    <property type="method" value="X-ray"/>
    <property type="resolution" value="2.50 A"/>
    <property type="chains" value="A=19-535"/>
</dbReference>
<dbReference type="PDB" id="8B3K">
    <property type="method" value="X-ray"/>
    <property type="resolution" value="2.69 A"/>
    <property type="chains" value="A/B=20-535"/>
</dbReference>
<dbReference type="PDBsum" id="2JPH"/>
<dbReference type="PDBsum" id="2OS6"/>
<dbReference type="PDBsum" id="2R2O"/>
<dbReference type="PDBsum" id="2REX"/>
<dbReference type="PDBsum" id="3HM6"/>
<dbReference type="PDBsum" id="3OL2"/>
<dbReference type="PDBsum" id="3SU8"/>
<dbReference type="PDBsum" id="3SUA"/>
<dbReference type="PDBsum" id="5B4W"/>
<dbReference type="PDBsum" id="7VF3"/>
<dbReference type="PDBsum" id="7VG7"/>
<dbReference type="PDBsum" id="8B3K"/>
<dbReference type="BMRB" id="O43157"/>
<dbReference type="SMR" id="O43157"/>
<dbReference type="BioGRID" id="111377">
    <property type="interactions" value="43"/>
</dbReference>
<dbReference type="CORUM" id="O43157"/>
<dbReference type="DIP" id="DIP-36742N"/>
<dbReference type="FunCoup" id="O43157">
    <property type="interactions" value="232"/>
</dbReference>
<dbReference type="IntAct" id="O43157">
    <property type="interactions" value="25"/>
</dbReference>
<dbReference type="MINT" id="O43157"/>
<dbReference type="STRING" id="9606.ENSP00000351338"/>
<dbReference type="GlyConnect" id="1612">
    <property type="glycosylation" value="7 N-Linked glycans (2 sites)"/>
</dbReference>
<dbReference type="GlyCosmos" id="O43157">
    <property type="glycosylation" value="10 sites, 12 glycans"/>
</dbReference>
<dbReference type="GlyGen" id="O43157">
    <property type="glycosylation" value="17 sites, 26 N-linked glycans (3 sites), 3 O-linked glycans (9 sites)"/>
</dbReference>
<dbReference type="iPTMnet" id="O43157"/>
<dbReference type="PhosphoSitePlus" id="O43157"/>
<dbReference type="BioMuta" id="PLXNB1"/>
<dbReference type="jPOST" id="O43157"/>
<dbReference type="MassIVE" id="O43157"/>
<dbReference type="PaxDb" id="9606-ENSP00000351338"/>
<dbReference type="PeptideAtlas" id="O43157"/>
<dbReference type="ProteomicsDB" id="48777">
    <molecule id="O43157-1"/>
</dbReference>
<dbReference type="ProteomicsDB" id="48778">
    <molecule id="O43157-2"/>
</dbReference>
<dbReference type="ProteomicsDB" id="48779">
    <molecule id="O43157-3"/>
</dbReference>
<dbReference type="Pumba" id="O43157"/>
<dbReference type="Antibodypedia" id="49406">
    <property type="antibodies" value="282 antibodies from 31 providers"/>
</dbReference>
<dbReference type="DNASU" id="5364"/>
<dbReference type="Ensembl" id="ENST00000296440.11">
    <molecule id="O43157-1"/>
    <property type="protein sequence ID" value="ENSP00000296440.6"/>
    <property type="gene ID" value="ENSG00000164050.13"/>
</dbReference>
<dbReference type="Ensembl" id="ENST00000358536.8">
    <molecule id="O43157-1"/>
    <property type="protein sequence ID" value="ENSP00000351338.4"/>
    <property type="gene ID" value="ENSG00000164050.13"/>
</dbReference>
<dbReference type="Ensembl" id="ENST00000449094.5">
    <molecule id="O43157-3"/>
    <property type="protein sequence ID" value="ENSP00000395987.1"/>
    <property type="gene ID" value="ENSG00000164050.13"/>
</dbReference>
<dbReference type="Ensembl" id="ENST00000456774.5">
    <molecule id="O43157-2"/>
    <property type="protein sequence ID" value="ENSP00000414199.1"/>
    <property type="gene ID" value="ENSG00000164050.13"/>
</dbReference>
<dbReference type="GeneID" id="5364"/>
<dbReference type="KEGG" id="hsa:5364"/>
<dbReference type="MANE-Select" id="ENST00000296440.11">
    <property type="protein sequence ID" value="ENSP00000296440.6"/>
    <property type="RefSeq nucleotide sequence ID" value="NM_001130082.3"/>
    <property type="RefSeq protein sequence ID" value="NP_001123554.1"/>
</dbReference>
<dbReference type="UCSC" id="uc003csu.3">
    <molecule id="O43157-1"/>
    <property type="organism name" value="human"/>
</dbReference>
<dbReference type="AGR" id="HGNC:9103"/>
<dbReference type="CTD" id="5364"/>
<dbReference type="DisGeNET" id="5364"/>
<dbReference type="GeneCards" id="PLXNB1"/>
<dbReference type="HGNC" id="HGNC:9103">
    <property type="gene designation" value="PLXNB1"/>
</dbReference>
<dbReference type="HPA" id="ENSG00000164050">
    <property type="expression patterns" value="Low tissue specificity"/>
</dbReference>
<dbReference type="MIM" id="601053">
    <property type="type" value="gene"/>
</dbReference>
<dbReference type="neXtProt" id="NX_O43157"/>
<dbReference type="OpenTargets" id="ENSG00000164050"/>
<dbReference type="PharmGKB" id="PA33429"/>
<dbReference type="VEuPathDB" id="HostDB:ENSG00000164050"/>
<dbReference type="eggNOG" id="KOG3610">
    <property type="taxonomic scope" value="Eukaryota"/>
</dbReference>
<dbReference type="GeneTree" id="ENSGT01020000230394"/>
<dbReference type="HOGENOM" id="CLU_001436_1_1_1"/>
<dbReference type="InParanoid" id="O43157"/>
<dbReference type="OMA" id="SPGDHEC"/>
<dbReference type="OrthoDB" id="125363at2759"/>
<dbReference type="PAN-GO" id="O43157">
    <property type="GO annotations" value="9 GO annotations based on evolutionary models"/>
</dbReference>
<dbReference type="PhylomeDB" id="O43157"/>
<dbReference type="TreeFam" id="TF312962"/>
<dbReference type="PathwayCommons" id="O43157"/>
<dbReference type="Reactome" id="R-HSA-416482">
    <property type="pathway name" value="G alpha (12/13) signalling events"/>
</dbReference>
<dbReference type="Reactome" id="R-HSA-416550">
    <property type="pathway name" value="Sema4D mediated inhibition of cell attachment and migration"/>
</dbReference>
<dbReference type="Reactome" id="R-HSA-416572">
    <property type="pathway name" value="Sema4D induced cell migration and growth-cone collapse"/>
</dbReference>
<dbReference type="Reactome" id="R-HSA-9013405">
    <property type="pathway name" value="RHOD GTPase cycle"/>
</dbReference>
<dbReference type="SignaLink" id="O43157"/>
<dbReference type="SIGNOR" id="O43157"/>
<dbReference type="BioGRID-ORCS" id="5364">
    <property type="hits" value="16 hits in 1162 CRISPR screens"/>
</dbReference>
<dbReference type="ChiTaRS" id="PLXNB1">
    <property type="organism name" value="human"/>
</dbReference>
<dbReference type="EvolutionaryTrace" id="O43157"/>
<dbReference type="GeneWiki" id="PLXNB1"/>
<dbReference type="GenomeRNAi" id="5364"/>
<dbReference type="Pharos" id="O43157">
    <property type="development level" value="Tbio"/>
</dbReference>
<dbReference type="PRO" id="PR:O43157"/>
<dbReference type="Proteomes" id="UP000005640">
    <property type="component" value="Chromosome 3"/>
</dbReference>
<dbReference type="RNAct" id="O43157">
    <property type="molecule type" value="protein"/>
</dbReference>
<dbReference type="Bgee" id="ENSG00000164050">
    <property type="expression patterns" value="Expressed in right uterine tube and 170 other cell types or tissues"/>
</dbReference>
<dbReference type="GO" id="GO:0005576">
    <property type="term" value="C:extracellular region"/>
    <property type="evidence" value="ECO:0007669"/>
    <property type="project" value="UniProtKB-SubCell"/>
</dbReference>
<dbReference type="GO" id="GO:0098978">
    <property type="term" value="C:glutamatergic synapse"/>
    <property type="evidence" value="ECO:0007669"/>
    <property type="project" value="Ensembl"/>
</dbReference>
<dbReference type="GO" id="GO:0005886">
    <property type="term" value="C:plasma membrane"/>
    <property type="evidence" value="ECO:0000314"/>
    <property type="project" value="UniProtKB"/>
</dbReference>
<dbReference type="GO" id="GO:0045211">
    <property type="term" value="C:postsynaptic membrane"/>
    <property type="evidence" value="ECO:0007669"/>
    <property type="project" value="Ensembl"/>
</dbReference>
<dbReference type="GO" id="GO:0002116">
    <property type="term" value="C:semaphorin receptor complex"/>
    <property type="evidence" value="ECO:0000314"/>
    <property type="project" value="UniProtKB"/>
</dbReference>
<dbReference type="GO" id="GO:0032794">
    <property type="term" value="F:GTPase activating protein binding"/>
    <property type="evidence" value="ECO:0000250"/>
    <property type="project" value="BHF-UCL"/>
</dbReference>
<dbReference type="GO" id="GO:0005096">
    <property type="term" value="F:GTPase activator activity"/>
    <property type="evidence" value="ECO:0000304"/>
    <property type="project" value="Reactome"/>
</dbReference>
<dbReference type="GO" id="GO:0017154">
    <property type="term" value="F:semaphorin receptor activity"/>
    <property type="evidence" value="ECO:0000314"/>
    <property type="project" value="UniProtKB"/>
</dbReference>
<dbReference type="GO" id="GO:0030215">
    <property type="term" value="F:semaphorin receptor binding"/>
    <property type="evidence" value="ECO:0000304"/>
    <property type="project" value="UniProtKB"/>
</dbReference>
<dbReference type="GO" id="GO:0004888">
    <property type="term" value="F:transmembrane signaling receptor activity"/>
    <property type="evidence" value="ECO:0000303"/>
    <property type="project" value="UniProtKB"/>
</dbReference>
<dbReference type="GO" id="GO:0016477">
    <property type="term" value="P:cell migration"/>
    <property type="evidence" value="ECO:0000303"/>
    <property type="project" value="UniProtKB"/>
</dbReference>
<dbReference type="GO" id="GO:1904862">
    <property type="term" value="P:inhibitory synapse assembly"/>
    <property type="evidence" value="ECO:0000250"/>
    <property type="project" value="UniProtKB"/>
</dbReference>
<dbReference type="GO" id="GO:0035556">
    <property type="term" value="P:intracellular signal transduction"/>
    <property type="evidence" value="ECO:0000303"/>
    <property type="project" value="UniProtKB"/>
</dbReference>
<dbReference type="GO" id="GO:0007162">
    <property type="term" value="P:negative regulation of cell adhesion"/>
    <property type="evidence" value="ECO:0000314"/>
    <property type="project" value="UniProtKB"/>
</dbReference>
<dbReference type="GO" id="GO:0033689">
    <property type="term" value="P:negative regulation of osteoblast proliferation"/>
    <property type="evidence" value="ECO:0000250"/>
    <property type="project" value="BHF-UCL"/>
</dbReference>
<dbReference type="GO" id="GO:0048812">
    <property type="term" value="P:neuron projection morphogenesis"/>
    <property type="evidence" value="ECO:0000250"/>
    <property type="project" value="UniProtKB"/>
</dbReference>
<dbReference type="GO" id="GO:0043931">
    <property type="term" value="P:ossification involved in bone maturation"/>
    <property type="evidence" value="ECO:0000250"/>
    <property type="project" value="BHF-UCL"/>
</dbReference>
<dbReference type="GO" id="GO:0050772">
    <property type="term" value="P:positive regulation of axonogenesis"/>
    <property type="evidence" value="ECO:0000318"/>
    <property type="project" value="GO_Central"/>
</dbReference>
<dbReference type="GO" id="GO:0043547">
    <property type="term" value="P:positive regulation of GTPase activity"/>
    <property type="evidence" value="ECO:0000250"/>
    <property type="project" value="UniProtKB"/>
</dbReference>
<dbReference type="GO" id="GO:0051897">
    <property type="term" value="P:positive regulation of phosphatidylinositol 3-kinase/protein kinase B signal transduction"/>
    <property type="evidence" value="ECO:0000250"/>
    <property type="project" value="UniProtKB"/>
</dbReference>
<dbReference type="GO" id="GO:0035025">
    <property type="term" value="P:positive regulation of Rho protein signal transduction"/>
    <property type="evidence" value="ECO:0000250"/>
    <property type="project" value="BHF-UCL"/>
</dbReference>
<dbReference type="GO" id="GO:0030334">
    <property type="term" value="P:regulation of cell migration"/>
    <property type="evidence" value="ECO:0000318"/>
    <property type="project" value="GO_Central"/>
</dbReference>
<dbReference type="GO" id="GO:0008360">
    <property type="term" value="P:regulation of cell shape"/>
    <property type="evidence" value="ECO:0000314"/>
    <property type="project" value="UniProtKB"/>
</dbReference>
<dbReference type="GO" id="GO:0051493">
    <property type="term" value="P:regulation of cytoskeleton organization"/>
    <property type="evidence" value="ECO:0000314"/>
    <property type="project" value="UniProtKB"/>
</dbReference>
<dbReference type="GO" id="GO:0071526">
    <property type="term" value="P:semaphorin-plexin signaling pathway"/>
    <property type="evidence" value="ECO:0000314"/>
    <property type="project" value="UniProtKB"/>
</dbReference>
<dbReference type="GO" id="GO:0007416">
    <property type="term" value="P:synapse assembly"/>
    <property type="evidence" value="ECO:0000318"/>
    <property type="project" value="GO_Central"/>
</dbReference>
<dbReference type="CDD" id="cd01180">
    <property type="entry name" value="IPT_plexin_repeat1"/>
    <property type="match status" value="1"/>
</dbReference>
<dbReference type="CDD" id="cd01179">
    <property type="entry name" value="IPT_plexin_repeat2"/>
    <property type="match status" value="1"/>
</dbReference>
<dbReference type="CDD" id="cd01181">
    <property type="entry name" value="IPT_plexin_repeat3"/>
    <property type="match status" value="1"/>
</dbReference>
<dbReference type="CDD" id="cd12793">
    <property type="entry name" value="RasGAP_plexin_B1"/>
    <property type="match status" value="1"/>
</dbReference>
<dbReference type="CDD" id="cd11275">
    <property type="entry name" value="Sema_plexin_B1"/>
    <property type="match status" value="1"/>
</dbReference>
<dbReference type="FunFam" id="1.10.506.10:FF:000010">
    <property type="entry name" value="Plexin B1"/>
    <property type="match status" value="1"/>
</dbReference>
<dbReference type="FunFam" id="1.10.506.10:FF:000012">
    <property type="entry name" value="Plexin B1"/>
    <property type="match status" value="1"/>
</dbReference>
<dbReference type="FunFam" id="2.130.10.10:FF:000126">
    <property type="entry name" value="Plexin B1"/>
    <property type="match status" value="1"/>
</dbReference>
<dbReference type="FunFam" id="2.60.40.10:FF:000705">
    <property type="entry name" value="Plexin B1"/>
    <property type="match status" value="1"/>
</dbReference>
<dbReference type="FunFam" id="2.60.40.10:FF:000203">
    <property type="entry name" value="Plexin B2"/>
    <property type="match status" value="1"/>
</dbReference>
<dbReference type="FunFam" id="2.60.40.10:FF:000734">
    <property type="entry name" value="plexin-B1 isoform X1"/>
    <property type="match status" value="1"/>
</dbReference>
<dbReference type="FunFam" id="3.10.20.90:FF:000123">
    <property type="entry name" value="plexin-B1 isoform X1"/>
    <property type="match status" value="1"/>
</dbReference>
<dbReference type="Gene3D" id="1.10.506.10">
    <property type="entry name" value="GTPase Activation - p120gap, domain 1"/>
    <property type="match status" value="2"/>
</dbReference>
<dbReference type="Gene3D" id="2.60.40.10">
    <property type="entry name" value="Immunoglobulins"/>
    <property type="match status" value="4"/>
</dbReference>
<dbReference type="Gene3D" id="3.10.20.90">
    <property type="entry name" value="Phosphatidylinositol 3-kinase Catalytic Subunit, Chain A, domain 1"/>
    <property type="match status" value="1"/>
</dbReference>
<dbReference type="Gene3D" id="2.130.10.10">
    <property type="entry name" value="YVTN repeat-like/Quinoprotein amine dehydrogenase"/>
    <property type="match status" value="1"/>
</dbReference>
<dbReference type="InterPro" id="IPR013783">
    <property type="entry name" value="Ig-like_fold"/>
</dbReference>
<dbReference type="InterPro" id="IPR014756">
    <property type="entry name" value="Ig_E-set"/>
</dbReference>
<dbReference type="InterPro" id="IPR002909">
    <property type="entry name" value="IPT_dom"/>
</dbReference>
<dbReference type="InterPro" id="IPR031148">
    <property type="entry name" value="Plexin"/>
</dbReference>
<dbReference type="InterPro" id="IPR013548">
    <property type="entry name" value="Plexin_cytoplasmic_RasGAP_dom"/>
</dbReference>
<dbReference type="InterPro" id="IPR046800">
    <property type="entry name" value="Plexin_RBD"/>
</dbReference>
<dbReference type="InterPro" id="IPR002165">
    <property type="entry name" value="Plexin_repeat"/>
</dbReference>
<dbReference type="InterPro" id="IPR016201">
    <property type="entry name" value="PSI"/>
</dbReference>
<dbReference type="InterPro" id="IPR008936">
    <property type="entry name" value="Rho_GTPase_activation_prot"/>
</dbReference>
<dbReference type="InterPro" id="IPR001627">
    <property type="entry name" value="Semap_dom"/>
</dbReference>
<dbReference type="InterPro" id="IPR036352">
    <property type="entry name" value="Semap_dom_sf"/>
</dbReference>
<dbReference type="InterPro" id="IPR041019">
    <property type="entry name" value="TIG1_plexin"/>
</dbReference>
<dbReference type="InterPro" id="IPR041362">
    <property type="entry name" value="TIG2_plexin"/>
</dbReference>
<dbReference type="InterPro" id="IPR015943">
    <property type="entry name" value="WD40/YVTN_repeat-like_dom_sf"/>
</dbReference>
<dbReference type="PANTHER" id="PTHR22625">
    <property type="entry name" value="PLEXIN"/>
    <property type="match status" value="1"/>
</dbReference>
<dbReference type="PANTHER" id="PTHR22625:SF36">
    <property type="entry name" value="PLEXIN-B1"/>
    <property type="match status" value="1"/>
</dbReference>
<dbReference type="Pfam" id="PF08337">
    <property type="entry name" value="Plexin_cytopl"/>
    <property type="match status" value="1"/>
</dbReference>
<dbReference type="Pfam" id="PF20170">
    <property type="entry name" value="Plexin_RBD"/>
    <property type="match status" value="1"/>
</dbReference>
<dbReference type="Pfam" id="PF01437">
    <property type="entry name" value="PSI"/>
    <property type="match status" value="1"/>
</dbReference>
<dbReference type="Pfam" id="PF24317">
    <property type="entry name" value="PSI_Plexin-B"/>
    <property type="match status" value="1"/>
</dbReference>
<dbReference type="Pfam" id="PF24479">
    <property type="entry name" value="PSI_PlexinA-B"/>
    <property type="match status" value="1"/>
</dbReference>
<dbReference type="Pfam" id="PF01403">
    <property type="entry name" value="Sema"/>
    <property type="match status" value="1"/>
</dbReference>
<dbReference type="Pfam" id="PF01833">
    <property type="entry name" value="TIG"/>
    <property type="match status" value="3"/>
</dbReference>
<dbReference type="Pfam" id="PF18020">
    <property type="entry name" value="TIG_2"/>
    <property type="match status" value="1"/>
</dbReference>
<dbReference type="Pfam" id="PF17960">
    <property type="entry name" value="TIG_plexin"/>
    <property type="match status" value="1"/>
</dbReference>
<dbReference type="SMART" id="SM00429">
    <property type="entry name" value="IPT"/>
    <property type="match status" value="3"/>
</dbReference>
<dbReference type="SMART" id="SM00423">
    <property type="entry name" value="PSI"/>
    <property type="match status" value="3"/>
</dbReference>
<dbReference type="SMART" id="SM00630">
    <property type="entry name" value="Sema"/>
    <property type="match status" value="1"/>
</dbReference>
<dbReference type="SUPFAM" id="SSF81296">
    <property type="entry name" value="E set domains"/>
    <property type="match status" value="3"/>
</dbReference>
<dbReference type="SUPFAM" id="SSF48350">
    <property type="entry name" value="GTPase activation domain, GAP"/>
    <property type="match status" value="1"/>
</dbReference>
<dbReference type="SUPFAM" id="SSF103575">
    <property type="entry name" value="Plexin repeat"/>
    <property type="match status" value="1"/>
</dbReference>
<dbReference type="SUPFAM" id="SSF101912">
    <property type="entry name" value="Sema domain"/>
    <property type="match status" value="1"/>
</dbReference>
<dbReference type="PROSITE" id="PS51004">
    <property type="entry name" value="SEMA"/>
    <property type="match status" value="1"/>
</dbReference>
<sequence>MPALGPALLQALWAGWVLTLQPLPPTAFTPNGTYLQHLARDPTSGTLYLGATNFLFQLSPGLQLEATVSTGPVLDSRDCLPPVMPDECPQAQPTNNPNQLLLVSPGALVVCGSVHQGVCEQRRLGQLEQLLLRPERPGDTQYVAANDPAVSTVGLVAQGLAGEPLLFVGRGYTSRGVGGGIPPITTRALWPPDPQAAFSYEETAKLAVGRLSEYSHHFVSAFARGASAYFLFLRRDLQAQSRAFRAYVSRVCLRDQHYYSYVELPLACEGGRYGLIQAAAVATSREVAHGEVLFAAFSSAAPPTVGRPPSAAAGASGASALCAFPLDEVDRLANRTRDACYTREGRAEDGTEVAYIEYDVNSDCAQLPVDTLDAYPCGSDHTPSPMASRVPLEATPILEWPGIQLTAVAVTMEDGHTIAFLGDSQGQLHRVYLGPGSDGHPYSTQSIQQGSAVSRDLTFDGTFEHLYVMTQSTLLKVPVASCAQHLDCASCLAHRDPYCGWCVLLGRCSRRSECSRGQGPEQWLWSFQPELGCLQVAAMSPANISREETREVFLSVPDLPPLWPGESYSCHFGEHQSPALLTGSGVMCPSPDPSEAPVLPRGADYVSVSVELRFGAVVIAKTSLSFYDCVAVTELRPSAQCQACVSSRWGCNWCVWQHLCTHKASCDAGPMVASHQSPLVSPDPPARGGPSPSPPTAPKALATPAPDTLPVEPGAPSTATASDISPGASPSLLSPWGPWAGSGSISSPGSTGSPLHEEPSPPSPQNGPGTAVPAPTDFRPSATPEDLLASPLSPSEVAAVPPADPGPEALHPTVPLDLPPATVPATTFPGAMGSVKPALDWLTREGGELPEADEWTGGDAPAFSTSTLLSGDGDSAELEGPPAPLILPSSLDYQYDTPGLWELEEATLGASSCPCVESVQGSTLMPVHVEREIRLLGRNLHLFQDGPGDNECVMELEGLEVVVEARVECEPPPDTQCHVTCQQHQLSYEALQPELRVGLFLRRAGRLRVDSAEGLHVVLYDCSVGHGDCSRCQTAMPQYGCVWCEGERPRCVTREACGEAEAVATQCPAPLIHSVEPLTGPVDGGTRVTIRGSNLGQHVQDVLGMVTVAGVPCAVDAQEYEVSSSLVCITGASGEEVAGATAVEVPGRGRGVSEHDFAYQDPKVHSIFPARGPRAGGTRLTLNGSKLLTGRLEDIRVVVGDQPCHLLPEQQSEQLRCETSPRPTPATLPVAVWFGATERRLQRGQFKYTLDPNITSAGPTKSFLSGGREICVRGQNLDVVQTPRIRVTVVSRMLQPSQGLGRRRRVVPETACSLGPSCSSQQFEEPCHVNSSQLITCRTPALPGLPEDPWVRVEFILDNLVFDFATLNPTPFSYEADPTLQPLNPEDPTMPFRHKPGSVFSVEGENLDLAMSKEEVVAMIGDGPCVVKTLTRHHLYCEPPVEQPLPRHHALREAPDSLPEFTVQMGNLRFSLGHVQYDGESPGAFPVAAQVGLGVGTSLLALGVIIIVLMYRRKSKQALRDYKKVQIQLENLESSVRDRCKKEFTDLMTEMTDLTSDLLGSGIPFLDYKVYAERIFFPGHRESPLHRDLGVPESRRPTVEQGLGQLSNLLNSKLFLTKFIHTLESQRTFSARDRAYVASLLTVALHGKLEYFTDILRTLLSDLVAQYVAKNPKLMLRRTETVVEKLLTNWMSICLYTFVRDSVGEPLYMLFRGIKHQVDKGPVDSVTGKAKYTLNDNRLLREDVEYRPLTLNALLAVGPGAGEAQGVPVKVLDCDTISQAKEKMLDQLYKGVPLTQRPDPRTLDVEWRSGVAGHLILSDEDVTSEVQGLWRRLNTLQHYKVPDGATVALVPCLTKHVLRENQDYVPGERTPMLEDVDEGGIRPWHLVKPSDEPEPPRPRRGSLRGGERERAKAIPEIYLTRLLSMKGTLQKFVDDLFQVILSTSRPVPLAVKYFFDLLDEQAQQHGISDQDTIHIWKTNSLPLRFWINIIKNPQFVFDVQTSDNMDAVLLVIAQTFMDACTLADHKLGRDSPINKLLYARDIPRYKRMVERYYADIRQTVPASDQEMNSVLAELSWNYSGDLGARVALHELYKYINKYYDQIITALEEDGTAQKMQLGYRLQQIAAAVENKVTDL</sequence>
<feature type="signal peptide" evidence="2">
    <location>
        <begin position="1"/>
        <end position="19"/>
    </location>
</feature>
<feature type="chain" id="PRO_0000024671" description="Plexin-B1">
    <location>
        <begin position="20"/>
        <end position="2135"/>
    </location>
</feature>
<feature type="topological domain" description="Extracellular" evidence="2">
    <location>
        <begin position="20"/>
        <end position="1490"/>
    </location>
</feature>
<feature type="transmembrane region" description="Helical" evidence="2">
    <location>
        <begin position="1491"/>
        <end position="1511"/>
    </location>
</feature>
<feature type="topological domain" description="Cytoplasmic" evidence="2">
    <location>
        <begin position="1512"/>
        <end position="2135"/>
    </location>
</feature>
<feature type="domain" description="Sema" evidence="3">
    <location>
        <begin position="20"/>
        <end position="479"/>
    </location>
</feature>
<feature type="domain" description="IPT/TIG 1">
    <location>
        <begin position="1070"/>
        <end position="1160"/>
    </location>
</feature>
<feature type="domain" description="IPT/TIG 2">
    <location>
        <begin position="1162"/>
        <end position="1249"/>
    </location>
</feature>
<feature type="domain" description="IPT/TIG 3">
    <location>
        <begin position="1252"/>
        <end position="1375"/>
    </location>
</feature>
<feature type="region of interest" description="Disordered" evidence="4">
    <location>
        <begin position="671"/>
        <end position="829"/>
    </location>
</feature>
<feature type="region of interest" description="Disordered" evidence="4">
    <location>
        <begin position="849"/>
        <end position="884"/>
    </location>
</feature>
<feature type="region of interest" description="Disordered" evidence="4">
    <location>
        <begin position="1883"/>
        <end position="1908"/>
    </location>
</feature>
<feature type="coiled-coil region" evidence="2">
    <location>
        <begin position="1507"/>
        <end position="1539"/>
    </location>
</feature>
<feature type="compositionally biased region" description="Pro residues" evidence="4">
    <location>
        <begin position="681"/>
        <end position="697"/>
    </location>
</feature>
<feature type="compositionally biased region" description="Low complexity" evidence="4">
    <location>
        <begin position="698"/>
        <end position="710"/>
    </location>
</feature>
<feature type="compositionally biased region" description="Low complexity" evidence="4">
    <location>
        <begin position="734"/>
        <end position="754"/>
    </location>
</feature>
<feature type="compositionally biased region" description="Basic and acidic residues" evidence="4">
    <location>
        <begin position="1888"/>
        <end position="1897"/>
    </location>
</feature>
<feature type="site" description="Cleavage; by proprotein convertases">
    <location>
        <begin position="1305"/>
        <end position="1306"/>
    </location>
</feature>
<feature type="site" description="Important for interaction with RAC1 and RND1">
    <location>
        <position position="1815"/>
    </location>
</feature>
<feature type="glycosylation site" description="N-linked (GlcNAc...) asparagine" evidence="2">
    <location>
        <position position="31"/>
    </location>
</feature>
<feature type="glycosylation site" description="N-linked (GlcNAc...) asparagine" evidence="2">
    <location>
        <position position="334"/>
    </location>
</feature>
<feature type="glycosylation site" description="N-linked (GlcNAc...) asparagine" evidence="2">
    <location>
        <position position="543"/>
    </location>
</feature>
<feature type="glycosylation site" description="N-linked (GlcNAc...) asparagine" evidence="2">
    <location>
        <position position="1183"/>
    </location>
</feature>
<feature type="glycosylation site" description="N-linked (GlcNAc...) asparagine" evidence="13 18 19">
    <location>
        <position position="1253"/>
    </location>
</feature>
<feature type="glycosylation site" description="N-linked (GlcNAc...) asparagine" evidence="18">
    <location>
        <position position="1330"/>
    </location>
</feature>
<feature type="disulfide bond" evidence="3">
    <location>
        <begin position="79"/>
        <end position="88"/>
    </location>
</feature>
<feature type="disulfide bond" evidence="3">
    <location>
        <begin position="111"/>
        <end position="119"/>
    </location>
</feature>
<feature type="disulfide bond" evidence="3">
    <location>
        <begin position="252"/>
        <end position="377"/>
    </location>
</feature>
<feature type="disulfide bond" evidence="3">
    <location>
        <begin position="268"/>
        <end position="322"/>
    </location>
</feature>
<feature type="disulfide bond" evidence="3">
    <location>
        <begin position="340"/>
        <end position="364"/>
    </location>
</feature>
<feature type="disulfide bond" evidence="3">
    <location>
        <begin position="482"/>
        <end position="499"/>
    </location>
</feature>
<feature type="disulfide bond" evidence="3">
    <location>
        <begin position="488"/>
        <end position="533"/>
    </location>
</feature>
<feature type="disulfide bond" evidence="3">
    <location>
        <begin position="491"/>
        <end position="508"/>
    </location>
</feature>
<feature type="disulfide bond" evidence="3">
    <location>
        <begin position="502"/>
        <end position="514"/>
    </location>
</feature>
<feature type="disulfide bond" evidence="3">
    <location>
        <begin position="570"/>
        <end position="588"/>
    </location>
</feature>
<feature type="splice variant" id="VSP_011513" description="In isoform 3." evidence="24">
    <original>SPLVSPDPPARGGPSPSPPTAPKALATPAPDTLPVEPGAPSTATASDISPGAS</original>
    <variation>VMETQQSLRALPPPSSSRPASTTSMTPPGSGSWKRRPWGQAPAPVWRAFRAPR</variation>
    <location>
        <begin position="677"/>
        <end position="729"/>
    </location>
</feature>
<feature type="splice variant" id="VSP_011514" description="In isoform 2." evidence="24">
    <location>
        <begin position="688"/>
        <end position="870"/>
    </location>
</feature>
<feature type="splice variant" id="VSP_011515" description="In isoform 3." evidence="24">
    <location>
        <begin position="730"/>
        <end position="2135"/>
    </location>
</feature>
<feature type="sequence variant" id="VAR_050598" description="In dbSNP:rs34050056.">
    <original>R</original>
    <variation>W</variation>
    <location>
        <position position="389"/>
    </location>
</feature>
<feature type="sequence variant" id="VAR_050599" description="In dbSNP:rs35592743.">
    <original>S</original>
    <variation>L</variation>
    <location>
        <position position="753"/>
    </location>
</feature>
<feature type="sequence variant" id="VAR_036074" description="In a breast cancer sample; somatic mutation." evidence="14">
    <original>D</original>
    <variation>V</variation>
    <location>
        <position position="1891"/>
    </location>
</feature>
<feature type="mutagenesis site" description="Strongly reduced interaction with SEMA4D." evidence="21">
    <original>D</original>
    <variation>K</variation>
    <location>
        <position position="139"/>
    </location>
</feature>
<feature type="mutagenesis site" description="Abolishes cleavage by proprotein convertases." evidence="9">
    <original>RRRR</original>
    <variation>AAAA</variation>
    <location>
        <begin position="1302"/>
        <end position="1305"/>
    </location>
</feature>
<feature type="mutagenesis site" description="Abolishes interaction with RAC1 and RND1." evidence="16">
    <original>L</original>
    <variation>F</variation>
    <variation>P</variation>
    <location>
        <position position="1815"/>
    </location>
</feature>
<feature type="mutagenesis site" description="Loss of cytoskeleton remodeling in response to SEMA4D." evidence="20">
    <original>WH</original>
    <variation>SS</variation>
    <location>
        <begin position="1884"/>
        <end position="1885"/>
    </location>
</feature>
<feature type="sequence conflict" description="In Ref. 4; CAB57277." evidence="25" ref="4">
    <original>S</original>
    <variation>N</variation>
    <location>
        <position position="1297"/>
    </location>
</feature>
<feature type="sequence conflict" description="In Ref. 4; CAB57277." evidence="25" ref="4">
    <original>S</original>
    <variation>T</variation>
    <location>
        <position position="1625"/>
    </location>
</feature>
<feature type="strand" evidence="33">
    <location>
        <begin position="26"/>
        <end position="28"/>
    </location>
</feature>
<feature type="strand" evidence="33">
    <location>
        <begin position="35"/>
        <end position="40"/>
    </location>
</feature>
<feature type="turn" evidence="33">
    <location>
        <begin position="42"/>
        <end position="44"/>
    </location>
</feature>
<feature type="strand" evidence="33">
    <location>
        <begin position="47"/>
        <end position="51"/>
    </location>
</feature>
<feature type="strand" evidence="33">
    <location>
        <begin position="54"/>
        <end position="58"/>
    </location>
</feature>
<feature type="strand" evidence="33">
    <location>
        <begin position="64"/>
        <end position="69"/>
    </location>
</feature>
<feature type="strand" evidence="33">
    <location>
        <begin position="73"/>
        <end position="75"/>
    </location>
</feature>
<feature type="turn" evidence="33">
    <location>
        <begin position="85"/>
        <end position="87"/>
    </location>
</feature>
<feature type="strand" evidence="33">
    <location>
        <begin position="92"/>
        <end position="94"/>
    </location>
</feature>
<feature type="strand" evidence="33">
    <location>
        <begin position="98"/>
        <end position="103"/>
    </location>
</feature>
<feature type="strand" evidence="33">
    <location>
        <begin position="108"/>
        <end position="114"/>
    </location>
</feature>
<feature type="helix" evidence="33">
    <location>
        <begin position="115"/>
        <end position="117"/>
    </location>
</feature>
<feature type="strand" evidence="33">
    <location>
        <begin position="119"/>
        <end position="123"/>
    </location>
</feature>
<feature type="strand" evidence="33">
    <location>
        <begin position="126"/>
        <end position="132"/>
    </location>
</feature>
<feature type="helix" evidence="33">
    <location>
        <begin position="139"/>
        <end position="141"/>
    </location>
</feature>
<feature type="strand" evidence="33">
    <location>
        <begin position="152"/>
        <end position="158"/>
    </location>
</feature>
<feature type="strand" evidence="33">
    <location>
        <begin position="164"/>
        <end position="170"/>
    </location>
</feature>
<feature type="strand" evidence="33">
    <location>
        <begin position="175"/>
        <end position="177"/>
    </location>
</feature>
<feature type="strand" evidence="33">
    <location>
        <begin position="183"/>
        <end position="190"/>
    </location>
</feature>
<feature type="helix" evidence="33">
    <location>
        <begin position="194"/>
        <end position="196"/>
    </location>
</feature>
<feature type="strand" evidence="34">
    <location>
        <begin position="200"/>
        <end position="205"/>
    </location>
</feature>
<feature type="helix" evidence="33">
    <location>
        <begin position="211"/>
        <end position="214"/>
    </location>
</feature>
<feature type="strand" evidence="33">
    <location>
        <begin position="217"/>
        <end position="224"/>
    </location>
</feature>
<feature type="strand" evidence="33">
    <location>
        <begin position="227"/>
        <end position="235"/>
    </location>
</feature>
<feature type="strand" evidence="34">
    <location>
        <begin position="239"/>
        <end position="241"/>
    </location>
</feature>
<feature type="strand" evidence="33">
    <location>
        <begin position="244"/>
        <end position="256"/>
    </location>
</feature>
<feature type="strand" evidence="33">
    <location>
        <begin position="262"/>
        <end position="268"/>
    </location>
</feature>
<feature type="helix" evidence="33">
    <location>
        <begin position="269"/>
        <end position="271"/>
    </location>
</feature>
<feature type="strand" evidence="33">
    <location>
        <begin position="275"/>
        <end position="282"/>
    </location>
</feature>
<feature type="strand" evidence="34">
    <location>
        <begin position="284"/>
        <end position="286"/>
    </location>
</feature>
<feature type="strand" evidence="33">
    <location>
        <begin position="292"/>
        <end position="300"/>
    </location>
</feature>
<feature type="strand" evidence="32">
    <location>
        <begin position="310"/>
        <end position="313"/>
    </location>
</feature>
<feature type="helix" evidence="34">
    <location>
        <begin position="314"/>
        <end position="316"/>
    </location>
</feature>
<feature type="strand" evidence="33">
    <location>
        <begin position="318"/>
        <end position="325"/>
    </location>
</feature>
<feature type="helix" evidence="33">
    <location>
        <begin position="326"/>
        <end position="342"/>
    </location>
</feature>
<feature type="turn" evidence="30">
    <location>
        <begin position="344"/>
        <end position="346"/>
    </location>
</feature>
<feature type="strand" evidence="30">
    <location>
        <begin position="348"/>
        <end position="350"/>
    </location>
</feature>
<feature type="strand" evidence="33">
    <location>
        <begin position="354"/>
        <end position="356"/>
    </location>
</feature>
<feature type="helix" evidence="33">
    <location>
        <begin position="371"/>
        <end position="374"/>
    </location>
</feature>
<feature type="strand" evidence="32">
    <location>
        <begin position="380"/>
        <end position="382"/>
    </location>
</feature>
<feature type="strand" evidence="33">
    <location>
        <begin position="385"/>
        <end position="390"/>
    </location>
</feature>
<feature type="strand" evidence="33">
    <location>
        <begin position="392"/>
        <end position="394"/>
    </location>
</feature>
<feature type="strand" evidence="33">
    <location>
        <begin position="397"/>
        <end position="401"/>
    </location>
</feature>
<feature type="strand" evidence="33">
    <location>
        <begin position="405"/>
        <end position="413"/>
    </location>
</feature>
<feature type="strand" evidence="33">
    <location>
        <begin position="416"/>
        <end position="423"/>
    </location>
</feature>
<feature type="strand" evidence="33">
    <location>
        <begin position="426"/>
        <end position="432"/>
    </location>
</feature>
<feature type="strand" evidence="30">
    <location>
        <begin position="434"/>
        <end position="436"/>
    </location>
</feature>
<feature type="strand" evidence="33">
    <location>
        <begin position="442"/>
        <end position="448"/>
    </location>
</feature>
<feature type="strand" evidence="33">
    <location>
        <begin position="463"/>
        <end position="469"/>
    </location>
</feature>
<feature type="strand" evidence="33">
    <location>
        <begin position="474"/>
        <end position="479"/>
    </location>
</feature>
<feature type="helix" evidence="33">
    <location>
        <begin position="482"/>
        <end position="484"/>
    </location>
</feature>
<feature type="helix" evidence="33">
    <location>
        <begin position="488"/>
        <end position="493"/>
    </location>
</feature>
<feature type="strand" evidence="33">
    <location>
        <begin position="500"/>
        <end position="502"/>
    </location>
</feature>
<feature type="turn" evidence="33">
    <location>
        <begin position="503"/>
        <end position="506"/>
    </location>
</feature>
<feature type="strand" evidence="33">
    <location>
        <begin position="507"/>
        <end position="509"/>
    </location>
</feature>
<feature type="helix" evidence="33">
    <location>
        <begin position="511"/>
        <end position="513"/>
    </location>
</feature>
<feature type="strand" evidence="33">
    <location>
        <begin position="523"/>
        <end position="525"/>
    </location>
</feature>
<feature type="helix" evidence="29">
    <location>
        <begin position="1568"/>
        <end position="1576"/>
    </location>
</feature>
<feature type="strand" evidence="31">
    <location>
        <begin position="1580"/>
        <end position="1582"/>
    </location>
</feature>
<feature type="helix" evidence="29">
    <location>
        <begin position="1593"/>
        <end position="1595"/>
    </location>
</feature>
<feature type="helix" evidence="29">
    <location>
        <begin position="1596"/>
        <end position="1610"/>
    </location>
</feature>
<feature type="helix" evidence="29">
    <location>
        <begin position="1613"/>
        <end position="1625"/>
    </location>
</feature>
<feature type="strand" evidence="31">
    <location>
        <begin position="1627"/>
        <end position="1629"/>
    </location>
</feature>
<feature type="helix" evidence="29">
    <location>
        <begin position="1631"/>
        <end position="1644"/>
    </location>
</feature>
<feature type="turn" evidence="29">
    <location>
        <begin position="1645"/>
        <end position="1647"/>
    </location>
</feature>
<feature type="helix" evidence="29">
    <location>
        <begin position="1649"/>
        <end position="1668"/>
    </location>
</feature>
<feature type="helix" evidence="29">
    <location>
        <begin position="1672"/>
        <end position="1674"/>
    </location>
</feature>
<feature type="strand" evidence="31">
    <location>
        <begin position="1677"/>
        <end position="1679"/>
    </location>
</feature>
<feature type="helix" evidence="29">
    <location>
        <begin position="1682"/>
        <end position="1701"/>
    </location>
</feature>
<feature type="helix" evidence="29">
    <location>
        <begin position="1704"/>
        <end position="1719"/>
    </location>
</feature>
<feature type="turn" evidence="29">
    <location>
        <begin position="1725"/>
        <end position="1727"/>
    </location>
</feature>
<feature type="strand" evidence="29">
    <location>
        <begin position="1730"/>
        <end position="1732"/>
    </location>
</feature>
<feature type="strand" evidence="29">
    <location>
        <begin position="1736"/>
        <end position="1739"/>
    </location>
</feature>
<feature type="strand" evidence="27">
    <location>
        <begin position="1748"/>
        <end position="1755"/>
    </location>
</feature>
<feature type="strand" evidence="28">
    <location>
        <begin position="1757"/>
        <end position="1759"/>
    </location>
</feature>
<feature type="strand" evidence="27">
    <location>
        <begin position="1767"/>
        <end position="1772"/>
    </location>
</feature>
<feature type="helix" evidence="27">
    <location>
        <begin position="1777"/>
        <end position="1788"/>
    </location>
</feature>
<feature type="turn" evidence="27">
    <location>
        <begin position="1789"/>
        <end position="1791"/>
    </location>
</feature>
<feature type="helix" evidence="27">
    <location>
        <begin position="1794"/>
        <end position="1796"/>
    </location>
</feature>
<feature type="helix" evidence="27">
    <location>
        <begin position="1800"/>
        <end position="1802"/>
    </location>
</feature>
<feature type="strand" evidence="27">
    <location>
        <begin position="1803"/>
        <end position="1808"/>
    </location>
</feature>
<feature type="strand" evidence="27">
    <location>
        <begin position="1810"/>
        <end position="1812"/>
    </location>
</feature>
<feature type="strand" evidence="27">
    <location>
        <begin position="1814"/>
        <end position="1817"/>
    </location>
</feature>
<feature type="strand" evidence="27">
    <location>
        <begin position="1819"/>
        <end position="1821"/>
    </location>
</feature>
<feature type="strand" evidence="31">
    <location>
        <begin position="1825"/>
        <end position="1827"/>
    </location>
</feature>
<feature type="strand" evidence="27">
    <location>
        <begin position="1830"/>
        <end position="1832"/>
    </location>
</feature>
<feature type="helix" evidence="27">
    <location>
        <begin position="1836"/>
        <end position="1839"/>
    </location>
</feature>
<feature type="strand" evidence="27">
    <location>
        <begin position="1846"/>
        <end position="1851"/>
    </location>
</feature>
<feature type="strand" evidence="29">
    <location>
        <begin position="1882"/>
        <end position="1887"/>
    </location>
</feature>
<feature type="helix" evidence="29">
    <location>
        <begin position="1916"/>
        <end position="1941"/>
    </location>
</feature>
<feature type="strand" evidence="29">
    <location>
        <begin position="1943"/>
        <end position="1945"/>
    </location>
</feature>
<feature type="helix" evidence="29">
    <location>
        <begin position="1949"/>
        <end position="1964"/>
    </location>
</feature>
<feature type="helix" evidence="29">
    <location>
        <begin position="1970"/>
        <end position="1980"/>
    </location>
</feature>
<feature type="turn" evidence="29">
    <location>
        <begin position="1981"/>
        <end position="1985"/>
    </location>
</feature>
<feature type="helix" evidence="29">
    <location>
        <begin position="1986"/>
        <end position="1991"/>
    </location>
</feature>
<feature type="helix" evidence="29">
    <location>
        <begin position="1993"/>
        <end position="1995"/>
    </location>
</feature>
<feature type="helix" evidence="29">
    <location>
        <begin position="2003"/>
        <end position="2020"/>
    </location>
</feature>
<feature type="helix" evidence="29">
    <location>
        <begin position="2033"/>
        <end position="2037"/>
    </location>
</feature>
<feature type="turn" evidence="29">
    <location>
        <begin position="2038"/>
        <end position="2041"/>
    </location>
</feature>
<feature type="helix" evidence="29">
    <location>
        <begin position="2042"/>
        <end position="2058"/>
    </location>
</feature>
<feature type="helix" evidence="29">
    <location>
        <begin position="2064"/>
        <end position="2076"/>
    </location>
</feature>
<feature type="helix" evidence="29">
    <location>
        <begin position="2084"/>
        <end position="2097"/>
    </location>
</feature>
<feature type="helix" evidence="29">
    <location>
        <begin position="2099"/>
        <end position="2107"/>
    </location>
</feature>
<feature type="helix" evidence="29">
    <location>
        <begin position="2110"/>
        <end position="2114"/>
    </location>
</feature>
<feature type="helix" evidence="29">
    <location>
        <begin position="2117"/>
        <end position="2128"/>
    </location>
</feature>
<feature type="strand" evidence="26">
    <location>
        <begin position="2132"/>
        <end position="2134"/>
    </location>
</feature>
<comment type="function">
    <text evidence="1 7 8 12 20 21 22">Receptor for SEMA4D (PubMed:19843518, PubMed:20877282, PubMed:21912513). Plays a role in GABAergic synapse development (By similarity). Mediates SEMA4A- and SEMA4D-dependent inhibitory synapse development (By similarity). Plays a role in RHOA activation and subsequent changes of the actin cytoskeleton (PubMed:12196628, PubMed:15210733). Plays a role in axon guidance, invasive growth and cell migration (PubMed:12198496).</text>
</comment>
<comment type="subunit">
    <text evidence="1 5 6 7 8 9 10 11 12 15 16 17 20 21 22">Monomer, and heterodimer with PLXNB2 after proteolytic processing (PubMed:12533544, PubMed:17916560, PubMed:18275816, PubMed:18411422, PubMed:19843518, PubMed:20877282, PubMed:21912513). Binds RAC1 that has been activated by GTP binding (PubMed:11035813, PubMed:17916560, PubMed:18275816, PubMed:19843518). Interaction with SEMA4D promotes binding of cytoplasmic ligands (PubMed:10520995, PubMed:12198496, PubMed:19843518). Interacts with PLXNA1 (By similarity). Interacts with ARHGEF11 and ARHGEF12 (PubMed:12196628). Interacts with ERBB2 (PubMed:15210733). Interacts with MET (PubMed:12198496, PubMed:15184888). Interacts with MST1R (PubMed:15184888). Interacts with RRAS (PubMed:19843518). Interacts with RHOD (PubMed:17916560). Interacts with RND1 (PubMed:12730235, PubMed:17916560, PubMed:18275816, PubMed:19843518). Interacts with NRP1 and NRP2 (PubMed:10520995).</text>
</comment>
<comment type="interaction">
    <interactant intactId="EBI-1111488">
        <id>O43157</id>
    </interactant>
    <interactant intactId="EBI-1039152">
        <id>P08581</id>
        <label>MET</label>
    </interactant>
    <organismsDiffer>false</organismsDiffer>
    <experiments>7</experiments>
</comment>
<comment type="interaction">
    <interactant intactId="EBI-1111488">
        <id>O43157</id>
    </interactant>
    <interactant intactId="EBI-2637518">
        <id>Q04912</id>
        <label>MST1R</label>
    </interactant>
    <organismsDiffer>false</organismsDiffer>
    <experiments>3</experiments>
</comment>
<comment type="interaction">
    <interactant intactId="EBI-1111488">
        <id>O43157</id>
    </interactant>
    <interactant intactId="EBI-448618">
        <id>Q92730</id>
        <label>RND1</label>
    </interactant>
    <organismsDiffer>false</organismsDiffer>
    <experiments>4</experiments>
</comment>
<comment type="interaction">
    <interactant intactId="EBI-1111488">
        <id>O43157</id>
    </interactant>
    <interactant intactId="EBI-1111436">
        <id>P52198</id>
        <label>RND2</label>
    </interactant>
    <organismsDiffer>false</organismsDiffer>
    <experiments>2</experiments>
</comment>
<comment type="interaction">
    <interactant intactId="EBI-1111488">
        <id>O43157</id>
    </interactant>
    <interactant intactId="EBI-1111534">
        <id>P61587</id>
        <label>RND3</label>
    </interactant>
    <organismsDiffer>false</organismsDiffer>
    <experiments>3</experiments>
</comment>
<comment type="interaction">
    <interactant intactId="EBI-15880891">
        <id>O43157-1</id>
    </interactant>
    <interactant intactId="EBI-448618">
        <id>Q92730</id>
        <label>RND1</label>
    </interactant>
    <organismsDiffer>false</organismsDiffer>
    <experiments>2</experiments>
</comment>
<comment type="interaction">
    <interactant intactId="EBI-15880891">
        <id>O43157-1</id>
    </interactant>
    <interactant intactId="EBI-15880903">
        <id>Q92854-1</id>
        <label>SEMA4D</label>
    </interactant>
    <organismsDiffer>false</organismsDiffer>
    <experiments>3</experiments>
</comment>
<comment type="subcellular location">
    <molecule>Isoform 1</molecule>
    <subcellularLocation>
        <location evidence="9">Cell membrane</location>
        <topology evidence="2">Single-pass type I membrane protein</topology>
    </subcellularLocation>
</comment>
<comment type="subcellular location">
    <molecule>Isoform 2</molecule>
    <subcellularLocation>
        <location evidence="5">Secreted</location>
    </subcellularLocation>
</comment>
<comment type="subcellular location">
    <molecule>Isoform 3</molecule>
    <subcellularLocation>
        <location evidence="5">Secreted</location>
    </subcellularLocation>
</comment>
<comment type="alternative products">
    <event type="alternative splicing"/>
    <isoform>
        <id>O43157-1</id>
        <name>1</name>
        <sequence type="displayed"/>
    </isoform>
    <isoform>
        <id>O43157-2</id>
        <name>2</name>
        <name>Isoform R</name>
        <sequence type="described" ref="VSP_011514"/>
    </isoform>
    <isoform>
        <id>O43157-3</id>
        <name>3</name>
        <sequence type="described" ref="VSP_011513 VSP_011515"/>
    </isoform>
</comment>
<comment type="tissue specificity">
    <text evidence="23">Highly expressed in fetal kidney, and at slightly lower levels in fetal brain, lung and liver.</text>
</comment>
<comment type="PTM">
    <text evidence="5 12">Phosphorylated on tyrosine residues by ERBB2 and MET upon SEMA4D binding.</text>
</comment>
<comment type="PTM">
    <text evidence="9">Proteolytic processing favors heterodimerization with PLXNB2 and SEMA4D binding.</text>
</comment>
<comment type="similarity">
    <text evidence="25">Belongs to the plexin family.</text>
</comment>
<comment type="sequence caution" evidence="25">
    <conflict type="erroneous initiation">
        <sequence resource="EMBL-CDS" id="BAA23703"/>
    </conflict>
    <text>Extended N-terminus.</text>
</comment>
<comment type="online information" name="Atlas of Genetics and Cytogenetics in Oncology and Haematology">
    <link uri="https://atlasgeneticsoncology.org/gene/43413/PLXNB1"/>
</comment>
<protein>
    <recommendedName>
        <fullName>Plexin-B1</fullName>
    </recommendedName>
    <alternativeName>
        <fullName>Semaphorin receptor SEP</fullName>
    </alternativeName>
</protein>
<name>PLXB1_HUMAN</name>
<evidence type="ECO:0000250" key="1">
    <source>
        <dbReference type="UniProtKB" id="Q8CJH3"/>
    </source>
</evidence>
<evidence type="ECO:0000255" key="2"/>
<evidence type="ECO:0000255" key="3">
    <source>
        <dbReference type="PROSITE-ProRule" id="PRU00352"/>
    </source>
</evidence>
<evidence type="ECO:0000256" key="4">
    <source>
        <dbReference type="SAM" id="MobiDB-lite"/>
    </source>
</evidence>
<evidence type="ECO:0000269" key="5">
    <source>
    </source>
</evidence>
<evidence type="ECO:0000269" key="6">
    <source>
    </source>
</evidence>
<evidence type="ECO:0000269" key="7">
    <source>
    </source>
</evidence>
<evidence type="ECO:0000269" key="8">
    <source>
    </source>
</evidence>
<evidence type="ECO:0000269" key="9">
    <source>
    </source>
</evidence>
<evidence type="ECO:0000269" key="10">
    <source>
    </source>
</evidence>
<evidence type="ECO:0000269" key="11">
    <source>
    </source>
</evidence>
<evidence type="ECO:0000269" key="12">
    <source>
    </source>
</evidence>
<evidence type="ECO:0000269" key="13">
    <source>
    </source>
</evidence>
<evidence type="ECO:0000269" key="14">
    <source>
    </source>
</evidence>
<evidence type="ECO:0000269" key="15">
    <source>
    </source>
</evidence>
<evidence type="ECO:0000269" key="16">
    <source>
    </source>
</evidence>
<evidence type="ECO:0000269" key="17">
    <source>
    </source>
</evidence>
<evidence type="ECO:0000269" key="18">
    <source>
    </source>
</evidence>
<evidence type="ECO:0000269" key="19">
    <source>
    </source>
</evidence>
<evidence type="ECO:0000269" key="20">
    <source>
    </source>
</evidence>
<evidence type="ECO:0000269" key="21">
    <source>
    </source>
</evidence>
<evidence type="ECO:0000269" key="22">
    <source>
    </source>
</evidence>
<evidence type="ECO:0000269" key="23">
    <source>
    </source>
</evidence>
<evidence type="ECO:0000303" key="24">
    <source>
    </source>
</evidence>
<evidence type="ECO:0000305" key="25"/>
<evidence type="ECO:0007829" key="26">
    <source>
        <dbReference type="PDB" id="2OS6"/>
    </source>
</evidence>
<evidence type="ECO:0007829" key="27">
    <source>
        <dbReference type="PDB" id="2R2O"/>
    </source>
</evidence>
<evidence type="ECO:0007829" key="28">
    <source>
        <dbReference type="PDB" id="2REX"/>
    </source>
</evidence>
<evidence type="ECO:0007829" key="29">
    <source>
        <dbReference type="PDB" id="3HM6"/>
    </source>
</evidence>
<evidence type="ECO:0007829" key="30">
    <source>
        <dbReference type="PDB" id="3OL2"/>
    </source>
</evidence>
<evidence type="ECO:0007829" key="31">
    <source>
        <dbReference type="PDB" id="3SU8"/>
    </source>
</evidence>
<evidence type="ECO:0007829" key="32">
    <source>
        <dbReference type="PDB" id="5B4W"/>
    </source>
</evidence>
<evidence type="ECO:0007829" key="33">
    <source>
        <dbReference type="PDB" id="7VF3"/>
    </source>
</evidence>
<evidence type="ECO:0007829" key="34">
    <source>
        <dbReference type="PDB" id="7VG7"/>
    </source>
</evidence>
<reference key="1">
    <citation type="journal article" date="1997" name="DNA Res.">
        <title>Prediction of the coding sequences of unidentified human genes. VIII. 78 new cDNA clones from brain which code for large proteins in vitro.</title>
        <authorList>
            <person name="Ishikawa K."/>
            <person name="Nagase T."/>
            <person name="Nakajima D."/>
            <person name="Seki N."/>
            <person name="Ohira M."/>
            <person name="Miyajima N."/>
            <person name="Tanaka A."/>
            <person name="Kotani H."/>
            <person name="Nomura N."/>
            <person name="Ohara O."/>
        </authorList>
    </citation>
    <scope>NUCLEOTIDE SEQUENCE [LARGE SCALE MRNA] (ISOFORM 1)</scope>
    <source>
        <tissue>Brain</tissue>
    </source>
</reference>
<reference key="2">
    <citation type="journal article" date="1999" name="Cell">
        <title>Plexins are a large family of receptors for transmembrane, secreted and GPI-anchored semaphorins in vertebrates.</title>
        <authorList>
            <person name="Tamagnone L."/>
            <person name="Artigiani S."/>
            <person name="Chen H."/>
            <person name="He Z."/>
            <person name="Ming G.-L."/>
            <person name="Song H.-L."/>
            <person name="Chedotal A."/>
            <person name="Winberg M.L."/>
            <person name="Goodman C.S."/>
            <person name="Poo M.-M."/>
            <person name="Tessier-Lavigne M."/>
            <person name="Comoglio P.M."/>
        </authorList>
    </citation>
    <scope>NUCLEOTIDE SEQUENCE [MRNA] (ISOFORMS 1; 2 AND 3)</scope>
    <scope>PHOSPHORYLATION</scope>
    <scope>SUBCELLULAR LOCATION</scope>
    <scope>INTERACTION WITH SEMA4D; NRP1 AND NRP2</scope>
    <source>
        <tissue>Gastric carcinoma</tissue>
    </source>
</reference>
<reference key="3">
    <citation type="journal article" date="2001" name="Cell">
        <authorList>
            <person name="Tamagnone L."/>
            <person name="Artigiani S."/>
            <person name="Chen H."/>
            <person name="He Z."/>
            <person name="Ming G.-L."/>
            <person name="Song H.-L."/>
            <person name="Chedotal A."/>
            <person name="Winberg M.L."/>
            <person name="Goodman C.S."/>
            <person name="Poo M.-M."/>
            <person name="Tessier-Lavigne M."/>
            <person name="Comoglio P.M."/>
        </authorList>
    </citation>
    <scope>ERRATUM OF PUBMED:10520995</scope>
</reference>
<reference key="4">
    <citation type="journal article" date="1996" name="Proc. Natl. Acad. Sci. U.S.A.">
        <title>A family of transmembrane proteins with homology to the MET-hepatocyte growth factor receptor.</title>
        <authorList>
            <person name="Maestrini E."/>
            <person name="Tamagnone L."/>
            <person name="Longati P."/>
            <person name="Cremona O."/>
            <person name="Gulisano M."/>
            <person name="Bione S."/>
            <person name="Tamanini F."/>
            <person name="Neel B.G."/>
            <person name="Toniolo D."/>
            <person name="Comoglio P.M."/>
        </authorList>
    </citation>
    <scope>NUCLEOTIDE SEQUENCE [MRNA] (ISOFORM 1)</scope>
    <scope>TISSUE SPECIFICITY</scope>
    <source>
        <tissue>Fetal brain</tissue>
    </source>
</reference>
<reference key="5">
    <citation type="submission" date="2005-07" db="EMBL/GenBank/DDBJ databases">
        <authorList>
            <person name="Mural R.J."/>
            <person name="Istrail S."/>
            <person name="Sutton G.G."/>
            <person name="Florea L."/>
            <person name="Halpern A.L."/>
            <person name="Mobarry C.M."/>
            <person name="Lippert R."/>
            <person name="Walenz B."/>
            <person name="Shatkay H."/>
            <person name="Dew I."/>
            <person name="Miller J.R."/>
            <person name="Flanigan M.J."/>
            <person name="Edwards N.J."/>
            <person name="Bolanos R."/>
            <person name="Fasulo D."/>
            <person name="Halldorsson B.V."/>
            <person name="Hannenhalli S."/>
            <person name="Turner R."/>
            <person name="Yooseph S."/>
            <person name="Lu F."/>
            <person name="Nusskern D.R."/>
            <person name="Shue B.C."/>
            <person name="Zheng X.H."/>
            <person name="Zhong F."/>
            <person name="Delcher A.L."/>
            <person name="Huson D.H."/>
            <person name="Kravitz S.A."/>
            <person name="Mouchard L."/>
            <person name="Reinert K."/>
            <person name="Remington K.A."/>
            <person name="Clark A.G."/>
            <person name="Waterman M.S."/>
            <person name="Eichler E.E."/>
            <person name="Adams M.D."/>
            <person name="Hunkapiller M.W."/>
            <person name="Myers E.W."/>
            <person name="Venter J.C."/>
        </authorList>
    </citation>
    <scope>NUCLEOTIDE SEQUENCE [LARGE SCALE GENOMIC DNA]</scope>
</reference>
<reference key="6">
    <citation type="journal article" date="2004" name="Genome Res.">
        <title>The status, quality, and expansion of the NIH full-length cDNA project: the Mammalian Gene Collection (MGC).</title>
        <authorList>
            <consortium name="The MGC Project Team"/>
        </authorList>
    </citation>
    <scope>NUCLEOTIDE SEQUENCE [LARGE SCALE MRNA] (ISOFORM 1)</scope>
</reference>
<reference key="7">
    <citation type="journal article" date="2000" name="Proc. Natl. Acad. Sci. U.S.A.">
        <title>The semaphorin receptor plexin-B1 specifically interacts with active Rac in a ligand-dependent manner.</title>
        <authorList>
            <person name="Vikis H.G."/>
            <person name="Li W."/>
            <person name="He Z."/>
            <person name="Guan K.-L."/>
        </authorList>
    </citation>
    <scope>INTERACTION WITH RAC1</scope>
</reference>
<reference key="8">
    <citation type="journal article" date="2002" name="Nat. Cell Biol.">
        <title>The semaphorin 4D receptor controls invasive growth by coupling with Met.</title>
        <authorList>
            <person name="Giordano S."/>
            <person name="Corso S."/>
            <person name="Conrotto P."/>
            <person name="Artigiani S."/>
            <person name="Gilestro G."/>
            <person name="Barberis D."/>
            <person name="Tamagnone L."/>
            <person name="Comoglio P.M."/>
        </authorList>
    </citation>
    <scope>INTERACTION WITH SEMA4D AND MET</scope>
    <scope>FUNCTION</scope>
</reference>
<reference key="9">
    <citation type="journal article" date="2002" name="Proc. Natl. Acad. Sci. U.S.A.">
        <title>The semaphorin receptor plexin-B1 signals through a direct interaction with the Rho-specific nucleotide exchange factor, LARG.</title>
        <authorList>
            <person name="Aurandt J."/>
            <person name="Vikis H.G."/>
            <person name="Gutkind J.S."/>
            <person name="Ahn N."/>
            <person name="Guan K.-L."/>
        </authorList>
    </citation>
    <scope>INTERACTION WITH ARHGEF11 AND ARHGEF12</scope>
    <scope>FUNCTION</scope>
</reference>
<reference key="10">
    <citation type="journal article" date="2003" name="J. Biol. Chem.">
        <title>Functional regulation of semaphorin receptors by proprotein convertases.</title>
        <authorList>
            <person name="Artigiani S."/>
            <person name="Barberis D."/>
            <person name="Fazzari P."/>
            <person name="Longati P."/>
            <person name="Angelini P."/>
            <person name="van de Loo J.-W."/>
            <person name="Comoglio P.M."/>
            <person name="Tamagnone L."/>
        </authorList>
    </citation>
    <scope>HETERODIMERIZATION WITH PLXNB2</scope>
    <scope>MUTAGENESIS OF 1302-ARG--ARG-1305</scope>
    <scope>PROTEOLYTIC PROCESSING</scope>
    <scope>SUBCELLULAR LOCATION</scope>
</reference>
<reference key="11">
    <citation type="journal article" date="2003" name="J. Biol. Chem.">
        <title>Direct interaction of Rnd1 with Plexin-B1 regulates PDZ-RhoGEF-mediated Rho activation by Plexin-B1 and induces cell contraction in COS-7 cells.</title>
        <authorList>
            <person name="Oinuma I."/>
            <person name="Katoh H."/>
            <person name="Harada A."/>
            <person name="Negishi M."/>
        </authorList>
    </citation>
    <scope>INTERACTION WITH RND1</scope>
</reference>
<reference key="12">
    <citation type="journal article" date="2004" name="J. Cell Biol.">
        <title>Plexin-B1/RhoGEF-mediated RhoA activation involves the receptor tyrosine kinase ErbB-2.</title>
        <authorList>
            <person name="Swiercz J.M."/>
            <person name="Kuner R."/>
            <person name="Offermanns S."/>
        </authorList>
    </citation>
    <scope>INTERACTION WITH ERBB2</scope>
    <scope>PHOSPHORYLATION</scope>
    <scope>FUNCTION</scope>
</reference>
<reference key="13">
    <citation type="journal article" date="2004" name="Oncogene">
        <title>Interplay between scatter factor receptors and B plexins controls invasive growth.</title>
        <authorList>
            <person name="Conrotto P."/>
            <person name="Corso S."/>
            <person name="Gamberini S."/>
            <person name="Comoglio P.M."/>
            <person name="Giordano S."/>
        </authorList>
    </citation>
    <scope>INTERACTION WITH MET AND MST1R</scope>
</reference>
<reference key="14">
    <citation type="journal article" date="2005" name="J. Proteome Res.">
        <title>Human plasma N-glycoproteome analysis by immunoaffinity subtraction, hydrazide chemistry, and mass spectrometry.</title>
        <authorList>
            <person name="Liu T."/>
            <person name="Qian W.-J."/>
            <person name="Gritsenko M.A."/>
            <person name="Camp D.G. II"/>
            <person name="Monroe M.E."/>
            <person name="Moore R.J."/>
            <person name="Smith R.D."/>
        </authorList>
    </citation>
    <scope>GLYCOSYLATION [LARGE SCALE ANALYSIS] AT ASN-1253</scope>
    <source>
        <tissue>Plasma</tissue>
    </source>
</reference>
<reference key="15">
    <citation type="journal article" date="2009" name="J. Proteome Res.">
        <title>Glycoproteomics analysis of human liver tissue by combination of multiple enzyme digestion and hydrazide chemistry.</title>
        <authorList>
            <person name="Chen R."/>
            <person name="Jiang X."/>
            <person name="Sun D."/>
            <person name="Han G."/>
            <person name="Wang F."/>
            <person name="Ye M."/>
            <person name="Wang L."/>
            <person name="Zou H."/>
        </authorList>
    </citation>
    <scope>GLYCOSYLATION [LARGE SCALE ANALYSIS] AT ASN-1253 AND ASN-1330</scope>
    <source>
        <tissue>Liver</tissue>
    </source>
</reference>
<reference key="16">
    <citation type="journal article" date="2009" name="Nat. Biotechnol.">
        <title>Mass-spectrometric identification and relative quantification of N-linked cell surface glycoproteins.</title>
        <authorList>
            <person name="Wollscheid B."/>
            <person name="Bausch-Fluck D."/>
            <person name="Henderson C."/>
            <person name="O'Brien R."/>
            <person name="Bibel M."/>
            <person name="Schiess R."/>
            <person name="Aebersold R."/>
            <person name="Watts J.D."/>
        </authorList>
    </citation>
    <scope>GLYCOSYLATION [LARGE SCALE ANALYSIS] AT ASN-1253</scope>
    <source>
        <tissue>Leukemic T-cell</tissue>
    </source>
</reference>
<reference key="17">
    <citation type="journal article" date="2014" name="J. Proteomics">
        <title>An enzyme assisted RP-RPLC approach for in-depth analysis of human liver phosphoproteome.</title>
        <authorList>
            <person name="Bian Y."/>
            <person name="Song C."/>
            <person name="Cheng K."/>
            <person name="Dong M."/>
            <person name="Wang F."/>
            <person name="Huang J."/>
            <person name="Sun D."/>
            <person name="Wang L."/>
            <person name="Ye M."/>
            <person name="Zou H."/>
        </authorList>
    </citation>
    <scope>IDENTIFICATION BY MASS SPECTROMETRY [LARGE SCALE ANALYSIS]</scope>
    <source>
        <tissue>Liver</tissue>
    </source>
</reference>
<reference key="18">
    <citation type="journal article" date="2007" name="J. Biol. Chem.">
        <title>Binding of Rac1, Rnd1, and RhoD to a novel Rho GTPase interaction motif destabilizes dimerization of the plexin-B1 effector domain.</title>
        <authorList>
            <person name="Tong Y."/>
            <person name="Chugha P."/>
            <person name="Hota P.K."/>
            <person name="Alviani R.S."/>
            <person name="Li M."/>
            <person name="Tempel W."/>
            <person name="Shen L."/>
            <person name="Park H.W."/>
            <person name="Buck M."/>
        </authorList>
    </citation>
    <scope>X-RAY CRYSTALLOGRAPHY (2.0 ANGSTROMS) OF 1743-1862</scope>
    <scope>SUBUNIT</scope>
    <scope>INTERACTION WITH RAC1; RND1 AND RHOD</scope>
</reference>
<reference key="19">
    <citation type="journal article" date="2008" name="Protein Sci.">
        <title>Conformational change upon ligand binding and dynamics of the PDZ domain from leukemia-associated Rho guanine nucleotide exchange factor.</title>
        <authorList>
            <person name="Liu J."/>
            <person name="Zhang J."/>
            <person name="Yang Y."/>
            <person name="Huang H."/>
            <person name="Shen W."/>
            <person name="Hu Q."/>
            <person name="Wang X."/>
            <person name="Wu J."/>
            <person name="Shi Y."/>
        </authorList>
    </citation>
    <scope>STRUCTURE BY NMR OF 2128-2135 IN COMPLEX WITH ARHGEF12</scope>
    <scope>SUBUNIT</scope>
</reference>
<reference key="20">
    <citation type="journal article" date="2008" name="Structure">
        <title>Insights into oncogenic mutations of plexin-B1 based on the solution structure of the Rho GTPase binding domain.</title>
        <authorList>
            <person name="Tong Y."/>
            <person name="Hota P.K."/>
            <person name="Hamaneh M.B."/>
            <person name="Buck M."/>
        </authorList>
    </citation>
    <scope>STRUCTURE BY NMR OF 1743-1862</scope>
    <scope>MUTAGENESIS OF LEU-1815</scope>
    <scope>SUBUNIT</scope>
    <scope>INTERACTION WITH RAC1 AND RND1</scope>
</reference>
<reference key="21">
    <citation type="journal article" date="2009" name="J. Biol. Chem.">
        <title>Structure and function of the intracellular region of the plexin-B1 transmembrane receptor.</title>
        <authorList>
            <person name="Tong Y."/>
            <person name="Hota P.K."/>
            <person name="Penachioni J.Y."/>
            <person name="Hamaneh M.B."/>
            <person name="Kim S."/>
            <person name="Alviani R.S."/>
            <person name="Shen L."/>
            <person name="He H."/>
            <person name="Tempel W."/>
            <person name="Tamagnone L."/>
            <person name="Park H.W."/>
            <person name="Buck M."/>
        </authorList>
    </citation>
    <scope>X-RAY CRYSTALLOGRAPHY (2.3 ANGSTROMS) OF 1511-2135 IN COMPLEX WITH RND1</scope>
    <scope>FUNCTION</scope>
    <scope>SUBUNIT</scope>
    <scope>INTERACTION WITH SEMA4D; RND1; RAC1 AND RRAS</scope>
    <scope>MUTAGENESIS OF 1884-TRP-HIS-1885</scope>
</reference>
<reference key="22">
    <citation type="journal article" date="2010" name="Nature">
        <title>Structural basis of semaphorin-plexin signalling.</title>
        <authorList>
            <person name="Janssen B.J."/>
            <person name="Robinson R.A."/>
            <person name="Perez-Branguli F."/>
            <person name="Bell C.H."/>
            <person name="Mitchell K.J."/>
            <person name="Siebold C."/>
            <person name="Jones E.Y."/>
        </authorList>
    </citation>
    <scope>X-RAY CRYSTALLOGRAPHY (2.99 ANGSTROMS) OF 20-535 IN COMPLEX WITH SEMA4D</scope>
    <scope>FUNCTION</scope>
    <scope>SUBUNIT</scope>
    <scope>MUTAGENESIS OF ASP-139</scope>
    <scope>GLYCOSYLATION AT ASN-334</scope>
    <scope>DISULFIDE BONDS</scope>
</reference>
<reference key="23">
    <citation type="journal article" date="2011" name="PLoS Biol.">
        <title>A dual binding mode for RhoGTPases in plexin signalling.</title>
        <authorList>
            <person name="Bell C.H."/>
            <person name="Aricescu A.R."/>
            <person name="Jones E.Y."/>
            <person name="Siebold C."/>
        </authorList>
    </citation>
    <scope>X-RAY CRYSTALLOGRAPHY (3.2 ANGSTROMS) OF 1533-2135 IN COMPLEX WITH RAC1</scope>
    <scope>SUBUNIT</scope>
    <scope>FUNCTION</scope>
</reference>
<reference key="24">
    <citation type="journal article" date="2006" name="Science">
        <title>The consensus coding sequences of human breast and colorectal cancers.</title>
        <authorList>
            <person name="Sjoeblom T."/>
            <person name="Jones S."/>
            <person name="Wood L.D."/>
            <person name="Parsons D.W."/>
            <person name="Lin J."/>
            <person name="Barber T.D."/>
            <person name="Mandelker D."/>
            <person name="Leary R.J."/>
            <person name="Ptak J."/>
            <person name="Silliman N."/>
            <person name="Szabo S."/>
            <person name="Buckhaults P."/>
            <person name="Farrell C."/>
            <person name="Meeh P."/>
            <person name="Markowitz S.D."/>
            <person name="Willis J."/>
            <person name="Dawson D."/>
            <person name="Willson J.K.V."/>
            <person name="Gazdar A.F."/>
            <person name="Hartigan J."/>
            <person name="Wu L."/>
            <person name="Liu C."/>
            <person name="Parmigiani G."/>
            <person name="Park B.H."/>
            <person name="Bachman K.E."/>
            <person name="Papadopoulos N."/>
            <person name="Vogelstein B."/>
            <person name="Kinzler K.W."/>
            <person name="Velculescu V.E."/>
        </authorList>
    </citation>
    <scope>VARIANT [LARGE SCALE ANALYSIS] VAL-1891</scope>
</reference>
<organism>
    <name type="scientific">Homo sapiens</name>
    <name type="common">Human</name>
    <dbReference type="NCBI Taxonomy" id="9606"/>
    <lineage>
        <taxon>Eukaryota</taxon>
        <taxon>Metazoa</taxon>
        <taxon>Chordata</taxon>
        <taxon>Craniata</taxon>
        <taxon>Vertebrata</taxon>
        <taxon>Euteleostomi</taxon>
        <taxon>Mammalia</taxon>
        <taxon>Eutheria</taxon>
        <taxon>Euarchontoglires</taxon>
        <taxon>Primates</taxon>
        <taxon>Haplorrhini</taxon>
        <taxon>Catarrhini</taxon>
        <taxon>Hominidae</taxon>
        <taxon>Homo</taxon>
    </lineage>
</organism>